<comment type="function">
    <text evidence="1">This is one of the proteins that binds to the 5S RNA in the ribosome where it forms part of the central protuberance.</text>
</comment>
<comment type="subunit">
    <text evidence="1">Part of the 50S ribosomal subunit; part of the 5S rRNA/L5/L18/L25 subcomplex. Contacts the 5S rRNA. Binds to the 5S rRNA independently of L5 and L18.</text>
</comment>
<comment type="similarity">
    <text evidence="1">Belongs to the bacterial ribosomal protein bL25 family.</text>
</comment>
<sequence length="94" mass="10692">MFTINAEVRKEQGKGASRRLRAANKFPAIIYGGKEAPLAVELDHDKVMNMQVKAEFYSEVLTIVVDGKEIKVKAQDVQRHPYKPKLLHIDFVRA</sequence>
<accession>B7MFA0</accession>
<organism>
    <name type="scientific">Escherichia coli O45:K1 (strain S88 / ExPEC)</name>
    <dbReference type="NCBI Taxonomy" id="585035"/>
    <lineage>
        <taxon>Bacteria</taxon>
        <taxon>Pseudomonadati</taxon>
        <taxon>Pseudomonadota</taxon>
        <taxon>Gammaproteobacteria</taxon>
        <taxon>Enterobacterales</taxon>
        <taxon>Enterobacteriaceae</taxon>
        <taxon>Escherichia</taxon>
    </lineage>
</organism>
<keyword id="KW-1185">Reference proteome</keyword>
<keyword id="KW-0687">Ribonucleoprotein</keyword>
<keyword id="KW-0689">Ribosomal protein</keyword>
<keyword id="KW-0694">RNA-binding</keyword>
<keyword id="KW-0699">rRNA-binding</keyword>
<reference key="1">
    <citation type="journal article" date="2009" name="PLoS Genet.">
        <title>Organised genome dynamics in the Escherichia coli species results in highly diverse adaptive paths.</title>
        <authorList>
            <person name="Touchon M."/>
            <person name="Hoede C."/>
            <person name="Tenaillon O."/>
            <person name="Barbe V."/>
            <person name="Baeriswyl S."/>
            <person name="Bidet P."/>
            <person name="Bingen E."/>
            <person name="Bonacorsi S."/>
            <person name="Bouchier C."/>
            <person name="Bouvet O."/>
            <person name="Calteau A."/>
            <person name="Chiapello H."/>
            <person name="Clermont O."/>
            <person name="Cruveiller S."/>
            <person name="Danchin A."/>
            <person name="Diard M."/>
            <person name="Dossat C."/>
            <person name="Karoui M.E."/>
            <person name="Frapy E."/>
            <person name="Garry L."/>
            <person name="Ghigo J.M."/>
            <person name="Gilles A.M."/>
            <person name="Johnson J."/>
            <person name="Le Bouguenec C."/>
            <person name="Lescat M."/>
            <person name="Mangenot S."/>
            <person name="Martinez-Jehanne V."/>
            <person name="Matic I."/>
            <person name="Nassif X."/>
            <person name="Oztas S."/>
            <person name="Petit M.A."/>
            <person name="Pichon C."/>
            <person name="Rouy Z."/>
            <person name="Ruf C.S."/>
            <person name="Schneider D."/>
            <person name="Tourret J."/>
            <person name="Vacherie B."/>
            <person name="Vallenet D."/>
            <person name="Medigue C."/>
            <person name="Rocha E.P.C."/>
            <person name="Denamur E."/>
        </authorList>
    </citation>
    <scope>NUCLEOTIDE SEQUENCE [LARGE SCALE GENOMIC DNA]</scope>
    <source>
        <strain>S88 / ExPEC</strain>
    </source>
</reference>
<evidence type="ECO:0000255" key="1">
    <source>
        <dbReference type="HAMAP-Rule" id="MF_01336"/>
    </source>
</evidence>
<evidence type="ECO:0000305" key="2"/>
<proteinExistence type="inferred from homology"/>
<feature type="chain" id="PRO_1000142576" description="Large ribosomal subunit protein bL25">
    <location>
        <begin position="1"/>
        <end position="94"/>
    </location>
</feature>
<name>RL25_ECO45</name>
<dbReference type="EMBL" id="CU928161">
    <property type="protein sequence ID" value="CAR03616.1"/>
    <property type="molecule type" value="Genomic_DNA"/>
</dbReference>
<dbReference type="RefSeq" id="WP_000494186.1">
    <property type="nucleotide sequence ID" value="NC_011742.1"/>
</dbReference>
<dbReference type="SMR" id="B7MFA0"/>
<dbReference type="KEGG" id="ecz:ECS88_2334"/>
<dbReference type="HOGENOM" id="CLU_137946_0_0_6"/>
<dbReference type="Proteomes" id="UP000000747">
    <property type="component" value="Chromosome"/>
</dbReference>
<dbReference type="GO" id="GO:0022625">
    <property type="term" value="C:cytosolic large ribosomal subunit"/>
    <property type="evidence" value="ECO:0007669"/>
    <property type="project" value="TreeGrafter"/>
</dbReference>
<dbReference type="GO" id="GO:0008097">
    <property type="term" value="F:5S rRNA binding"/>
    <property type="evidence" value="ECO:0007669"/>
    <property type="project" value="InterPro"/>
</dbReference>
<dbReference type="GO" id="GO:0003735">
    <property type="term" value="F:structural constituent of ribosome"/>
    <property type="evidence" value="ECO:0007669"/>
    <property type="project" value="InterPro"/>
</dbReference>
<dbReference type="GO" id="GO:0006412">
    <property type="term" value="P:translation"/>
    <property type="evidence" value="ECO:0007669"/>
    <property type="project" value="UniProtKB-UniRule"/>
</dbReference>
<dbReference type="CDD" id="cd00495">
    <property type="entry name" value="Ribosomal_L25_TL5_CTC"/>
    <property type="match status" value="1"/>
</dbReference>
<dbReference type="FunFam" id="2.40.240.10:FF:000002">
    <property type="entry name" value="50S ribosomal protein L25"/>
    <property type="match status" value="1"/>
</dbReference>
<dbReference type="Gene3D" id="2.40.240.10">
    <property type="entry name" value="Ribosomal Protein L25, Chain P"/>
    <property type="match status" value="1"/>
</dbReference>
<dbReference type="HAMAP" id="MF_01336">
    <property type="entry name" value="Ribosomal_bL25"/>
    <property type="match status" value="1"/>
</dbReference>
<dbReference type="InterPro" id="IPR020056">
    <property type="entry name" value="Rbsml_bL25/Gln-tRNA_synth_N"/>
</dbReference>
<dbReference type="InterPro" id="IPR011035">
    <property type="entry name" value="Ribosomal_bL25/Gln-tRNA_synth"/>
</dbReference>
<dbReference type="InterPro" id="IPR020055">
    <property type="entry name" value="Ribosomal_bL25_short"/>
</dbReference>
<dbReference type="InterPro" id="IPR029751">
    <property type="entry name" value="Ribosomal_L25_dom"/>
</dbReference>
<dbReference type="InterPro" id="IPR020930">
    <property type="entry name" value="Ribosomal_uL5_bac-type"/>
</dbReference>
<dbReference type="NCBIfam" id="NF004612">
    <property type="entry name" value="PRK05943.1"/>
    <property type="match status" value="1"/>
</dbReference>
<dbReference type="PANTHER" id="PTHR33284">
    <property type="entry name" value="RIBOSOMAL PROTEIN L25/GLN-TRNA SYNTHETASE, ANTI-CODON-BINDING DOMAIN-CONTAINING PROTEIN"/>
    <property type="match status" value="1"/>
</dbReference>
<dbReference type="PANTHER" id="PTHR33284:SF1">
    <property type="entry name" value="RIBOSOMAL PROTEIN L25_GLN-TRNA SYNTHETASE, ANTI-CODON-BINDING DOMAIN-CONTAINING PROTEIN"/>
    <property type="match status" value="1"/>
</dbReference>
<dbReference type="Pfam" id="PF01386">
    <property type="entry name" value="Ribosomal_L25p"/>
    <property type="match status" value="1"/>
</dbReference>
<dbReference type="SUPFAM" id="SSF50715">
    <property type="entry name" value="Ribosomal protein L25-like"/>
    <property type="match status" value="1"/>
</dbReference>
<protein>
    <recommendedName>
        <fullName evidence="1">Large ribosomal subunit protein bL25</fullName>
    </recommendedName>
    <alternativeName>
        <fullName evidence="2">50S ribosomal protein L25</fullName>
    </alternativeName>
</protein>
<gene>
    <name evidence="1" type="primary">rplY</name>
    <name type="ordered locus">ECS88_2334</name>
</gene>